<proteinExistence type="evidence at protein level"/>
<protein>
    <recommendedName>
        <fullName evidence="4">U-scoloptoxin(11)-Ssd2a</fullName>
        <shortName evidence="4">U-SLPTX(11)-Ssd2a</shortName>
    </recommendedName>
    <alternativeName>
        <fullName evidence="3">Toxin SSD16</fullName>
    </alternativeName>
</protein>
<dbReference type="EMBL" id="KC144036">
    <property type="status" value="NOT_ANNOTATED_CDS"/>
    <property type="molecule type" value="mRNA"/>
</dbReference>
<dbReference type="SMR" id="P0DPU4"/>
<dbReference type="GO" id="GO:0005576">
    <property type="term" value="C:extracellular region"/>
    <property type="evidence" value="ECO:0007669"/>
    <property type="project" value="UniProtKB-SubCell"/>
</dbReference>
<dbReference type="GO" id="GO:0090729">
    <property type="term" value="F:toxin activity"/>
    <property type="evidence" value="ECO:0007669"/>
    <property type="project" value="UniProtKB-KW"/>
</dbReference>
<dbReference type="Gene3D" id="2.20.20.160">
    <property type="match status" value="2"/>
</dbReference>
<comment type="subcellular location">
    <subcellularLocation>
        <location evidence="2">Secreted</location>
    </subcellularLocation>
</comment>
<comment type="tissue specificity">
    <text evidence="5">Expressed by the venom gland.</text>
</comment>
<comment type="PTM">
    <text evidence="4">Contains 8 disulfide bonds.</text>
</comment>
<comment type="mass spectrometry"/>
<comment type="similarity">
    <text evidence="4">Belongs to the scoloptoxin-11 family.</text>
</comment>
<accession>P0DPU4</accession>
<organism>
    <name type="scientific">Scolopendra dehaani</name>
    <name type="common">Thai centipede</name>
    <name type="synonym">Scolopendra subspinipes dehaani</name>
    <dbReference type="NCBI Taxonomy" id="2609776"/>
    <lineage>
        <taxon>Eukaryota</taxon>
        <taxon>Metazoa</taxon>
        <taxon>Ecdysozoa</taxon>
        <taxon>Arthropoda</taxon>
        <taxon>Myriapoda</taxon>
        <taxon>Chilopoda</taxon>
        <taxon>Pleurostigmophora</taxon>
        <taxon>Scolopendromorpha</taxon>
        <taxon>Scolopendridae</taxon>
        <taxon>Scolopendra</taxon>
    </lineage>
</organism>
<sequence>MFQFCLLILLLAPGRFFSALGKPQETLTVENREGSDSKAIPTCREASFCAFLQKNPIDSNLDVLPTCTCTGGTTCSHSWDPNDGKSITEGNKQFKFCSNVPDTIKHECSAEEKALTGIFEEDKVTKKHLAYYGFLHCICPEHSDYPENSYDGTETVEGDKKITTEYYHCERLKTCKSDDTCHALAIGETKKIYYKDCNCPEGQTCPFELKSAYKTEYKETTDKFTTYSMRCQ</sequence>
<name>TXB2A_SCODE</name>
<reference key="1">
    <citation type="journal article" date="2012" name="J. Proteome Res.">
        <title>Venomic and transcriptomic analysis of centipede Scolopendra subspinipes dehaani.</title>
        <authorList>
            <person name="Liu Z.C."/>
            <person name="Zhang R."/>
            <person name="Zhao F."/>
            <person name="Chen Z.M."/>
            <person name="Liu H.W."/>
            <person name="Wang Y.J."/>
            <person name="Jiang P."/>
            <person name="Zhang Y."/>
            <person name="Wu Y."/>
            <person name="Ding J.P."/>
            <person name="Lee W.H."/>
            <person name="Zhang Y."/>
        </authorList>
    </citation>
    <scope>NUCLEOTIDE SEQUENCE [MRNA]</scope>
    <scope>PROTEIN SEQUENCE OF 33-62</scope>
    <scope>SUBCELLULAR LOCATION</scope>
    <scope>MASS SPECTROMETRY</scope>
    <source>
        <tissue>Venom</tissue>
        <tissue>Venom gland</tissue>
    </source>
</reference>
<evidence type="ECO:0000255" key="1"/>
<evidence type="ECO:0000269" key="2">
    <source>
    </source>
</evidence>
<evidence type="ECO:0000303" key="3">
    <source>
    </source>
</evidence>
<evidence type="ECO:0000305" key="4"/>
<evidence type="ECO:0000305" key="5">
    <source>
    </source>
</evidence>
<feature type="signal peptide" evidence="1">
    <location>
        <begin position="1"/>
        <end position="21"/>
    </location>
</feature>
<feature type="propeptide" id="PRO_0000446768" evidence="5">
    <location>
        <begin position="22"/>
        <end position="32"/>
    </location>
</feature>
<feature type="chain" id="PRO_0000446769" description="U-scoloptoxin(11)-Ssd2a" evidence="5">
    <location>
        <begin position="33"/>
        <end position="232"/>
    </location>
</feature>
<keyword id="KW-0903">Direct protein sequencing</keyword>
<keyword id="KW-1015">Disulfide bond</keyword>
<keyword id="KW-0964">Secreted</keyword>
<keyword id="KW-0732">Signal</keyword>
<keyword id="KW-0800">Toxin</keyword>